<feature type="chain" id="PRO_0000231216" description="UDP-N-acetylglucosamine 1-carboxyvinyltransferase 2">
    <location>
        <begin position="1"/>
        <end position="419"/>
    </location>
</feature>
<feature type="active site" description="Proton donor" evidence="1">
    <location>
        <position position="116"/>
    </location>
</feature>
<feature type="binding site" evidence="1">
    <location>
        <begin position="22"/>
        <end position="23"/>
    </location>
    <ligand>
        <name>phosphoenolpyruvate</name>
        <dbReference type="ChEBI" id="CHEBI:58702"/>
    </ligand>
</feature>
<feature type="binding site" evidence="1">
    <location>
        <position position="92"/>
    </location>
    <ligand>
        <name>UDP-N-acetyl-alpha-D-glucosamine</name>
        <dbReference type="ChEBI" id="CHEBI:57705"/>
    </ligand>
</feature>
<feature type="binding site" evidence="1">
    <location>
        <begin position="121"/>
        <end position="125"/>
    </location>
    <ligand>
        <name>UDP-N-acetyl-alpha-D-glucosamine</name>
        <dbReference type="ChEBI" id="CHEBI:57705"/>
    </ligand>
</feature>
<feature type="binding site" evidence="1">
    <location>
        <position position="306"/>
    </location>
    <ligand>
        <name>UDP-N-acetyl-alpha-D-glucosamine</name>
        <dbReference type="ChEBI" id="CHEBI:57705"/>
    </ligand>
</feature>
<feature type="binding site" evidence="1">
    <location>
        <position position="328"/>
    </location>
    <ligand>
        <name>UDP-N-acetyl-alpha-D-glucosamine</name>
        <dbReference type="ChEBI" id="CHEBI:57705"/>
    </ligand>
</feature>
<comment type="function">
    <text evidence="1">Cell wall formation. Adds enolpyruvyl to UDP-N-acetylglucosamine.</text>
</comment>
<comment type="catalytic activity">
    <reaction evidence="1">
        <text>phosphoenolpyruvate + UDP-N-acetyl-alpha-D-glucosamine = UDP-N-acetyl-3-O-(1-carboxyvinyl)-alpha-D-glucosamine + phosphate</text>
        <dbReference type="Rhea" id="RHEA:18681"/>
        <dbReference type="ChEBI" id="CHEBI:43474"/>
        <dbReference type="ChEBI" id="CHEBI:57705"/>
        <dbReference type="ChEBI" id="CHEBI:58702"/>
        <dbReference type="ChEBI" id="CHEBI:68483"/>
        <dbReference type="EC" id="2.5.1.7"/>
    </reaction>
</comment>
<comment type="pathway">
    <text evidence="1">Cell wall biogenesis; peptidoglycan biosynthesis.</text>
</comment>
<comment type="subcellular location">
    <subcellularLocation>
        <location evidence="1">Cytoplasm</location>
    </subcellularLocation>
</comment>
<comment type="similarity">
    <text evidence="1">Belongs to the EPSP synthase family. MurA subfamily.</text>
</comment>
<keyword id="KW-0131">Cell cycle</keyword>
<keyword id="KW-0132">Cell division</keyword>
<keyword id="KW-0133">Cell shape</keyword>
<keyword id="KW-0961">Cell wall biogenesis/degradation</keyword>
<keyword id="KW-0963">Cytoplasm</keyword>
<keyword id="KW-0573">Peptidoglycan synthesis</keyword>
<keyword id="KW-1185">Reference proteome</keyword>
<keyword id="KW-0808">Transferase</keyword>
<name>MURA2_LATSS</name>
<organism>
    <name type="scientific">Latilactobacillus sakei subsp. sakei (strain 23K)</name>
    <name type="common">Lactobacillus sakei subsp. sakei</name>
    <dbReference type="NCBI Taxonomy" id="314315"/>
    <lineage>
        <taxon>Bacteria</taxon>
        <taxon>Bacillati</taxon>
        <taxon>Bacillota</taxon>
        <taxon>Bacilli</taxon>
        <taxon>Lactobacillales</taxon>
        <taxon>Lactobacillaceae</taxon>
        <taxon>Latilactobacillus</taxon>
    </lineage>
</organism>
<sequence>MKKMLIQGGNLLSGEVTIGGAKNSTVAIIPAAILAESKVVLDSVPHIKDVNSLLSILEDMSVTSTFTGDTVEIDPTNIVSTPLPSGKIQSLRASYYFMGALLGRFGKAIVGLPGGDDIGPRPIDQHIKGFEALGAVVTNNHGAIEINAPEGLHGAKIYLDMASVGATINLLLAAVRAEGQTVIENAAREPEIVDIATFLNNMGAKVRGAGTDIIRIEGVAHLYGHNTHTIIPDRIEAGTYLSMAAAIGDGVNVKNIISEHMDAYLAKLEEMGVKMDVKEDSIFVYPSPDLKMVQVKTMPYPGFATDLQQPLTPLLLKAQGEGLVVDTLYPKRTRHVPELIRMGADISIENDVILLHHADKLQGAEVSADEIRGGACLMIAGLMANGVTTITNASNILRGYDRVIDKLTGLGAVVKMVEE</sequence>
<proteinExistence type="inferred from homology"/>
<reference key="1">
    <citation type="journal article" date="2005" name="Nat. Biotechnol.">
        <title>The complete genome sequence of the meat-borne lactic acid bacterium Lactobacillus sakei 23K.</title>
        <authorList>
            <person name="Chaillou S."/>
            <person name="Champomier-Verges M.-C."/>
            <person name="Cornet M."/>
            <person name="Crutz-Le Coq A.-M."/>
            <person name="Dudez A.-M."/>
            <person name="Martin V."/>
            <person name="Beaufils S."/>
            <person name="Darbon-Rongere E."/>
            <person name="Bossy R."/>
            <person name="Loux V."/>
            <person name="Zagorec M."/>
        </authorList>
    </citation>
    <scope>NUCLEOTIDE SEQUENCE [LARGE SCALE GENOMIC DNA]</scope>
    <source>
        <strain>23K</strain>
    </source>
</reference>
<dbReference type="EC" id="2.5.1.7" evidence="1"/>
<dbReference type="EMBL" id="CR936503">
    <property type="protein sequence ID" value="CAI55935.1"/>
    <property type="molecule type" value="Genomic_DNA"/>
</dbReference>
<dbReference type="RefSeq" id="WP_011375320.1">
    <property type="nucleotide sequence ID" value="NC_007576.1"/>
</dbReference>
<dbReference type="SMR" id="Q38V49"/>
<dbReference type="STRING" id="314315.LCA_1628"/>
<dbReference type="KEGG" id="lsa:LCA_1628"/>
<dbReference type="eggNOG" id="COG0766">
    <property type="taxonomic scope" value="Bacteria"/>
</dbReference>
<dbReference type="HOGENOM" id="CLU_027387_0_0_9"/>
<dbReference type="OrthoDB" id="9803760at2"/>
<dbReference type="UniPathway" id="UPA00219"/>
<dbReference type="Proteomes" id="UP000002707">
    <property type="component" value="Chromosome"/>
</dbReference>
<dbReference type="GO" id="GO:0005737">
    <property type="term" value="C:cytoplasm"/>
    <property type="evidence" value="ECO:0007669"/>
    <property type="project" value="UniProtKB-SubCell"/>
</dbReference>
<dbReference type="GO" id="GO:0008760">
    <property type="term" value="F:UDP-N-acetylglucosamine 1-carboxyvinyltransferase activity"/>
    <property type="evidence" value="ECO:0007669"/>
    <property type="project" value="UniProtKB-UniRule"/>
</dbReference>
<dbReference type="GO" id="GO:0051301">
    <property type="term" value="P:cell division"/>
    <property type="evidence" value="ECO:0007669"/>
    <property type="project" value="UniProtKB-KW"/>
</dbReference>
<dbReference type="GO" id="GO:0071555">
    <property type="term" value="P:cell wall organization"/>
    <property type="evidence" value="ECO:0007669"/>
    <property type="project" value="UniProtKB-KW"/>
</dbReference>
<dbReference type="GO" id="GO:0009252">
    <property type="term" value="P:peptidoglycan biosynthetic process"/>
    <property type="evidence" value="ECO:0007669"/>
    <property type="project" value="UniProtKB-UniRule"/>
</dbReference>
<dbReference type="GO" id="GO:0008360">
    <property type="term" value="P:regulation of cell shape"/>
    <property type="evidence" value="ECO:0007669"/>
    <property type="project" value="UniProtKB-KW"/>
</dbReference>
<dbReference type="GO" id="GO:0019277">
    <property type="term" value="P:UDP-N-acetylgalactosamine biosynthetic process"/>
    <property type="evidence" value="ECO:0007669"/>
    <property type="project" value="InterPro"/>
</dbReference>
<dbReference type="CDD" id="cd01555">
    <property type="entry name" value="UdpNAET"/>
    <property type="match status" value="1"/>
</dbReference>
<dbReference type="Gene3D" id="3.65.10.10">
    <property type="entry name" value="Enolpyruvate transferase domain"/>
    <property type="match status" value="2"/>
</dbReference>
<dbReference type="HAMAP" id="MF_00111">
    <property type="entry name" value="MurA"/>
    <property type="match status" value="1"/>
</dbReference>
<dbReference type="InterPro" id="IPR001986">
    <property type="entry name" value="Enolpyruvate_Tfrase_dom"/>
</dbReference>
<dbReference type="InterPro" id="IPR036968">
    <property type="entry name" value="Enolpyruvate_Tfrase_sf"/>
</dbReference>
<dbReference type="InterPro" id="IPR050068">
    <property type="entry name" value="MurA_subfamily"/>
</dbReference>
<dbReference type="InterPro" id="IPR013792">
    <property type="entry name" value="RNA3'P_cycl/enolpyr_Trfase_a/b"/>
</dbReference>
<dbReference type="InterPro" id="IPR005750">
    <property type="entry name" value="UDP_GlcNAc_COvinyl_MurA"/>
</dbReference>
<dbReference type="NCBIfam" id="TIGR01072">
    <property type="entry name" value="murA"/>
    <property type="match status" value="1"/>
</dbReference>
<dbReference type="NCBIfam" id="NF006873">
    <property type="entry name" value="PRK09369.1"/>
    <property type="match status" value="1"/>
</dbReference>
<dbReference type="NCBIfam" id="NF009470">
    <property type="entry name" value="PRK12830.1"/>
    <property type="match status" value="1"/>
</dbReference>
<dbReference type="PANTHER" id="PTHR43783">
    <property type="entry name" value="UDP-N-ACETYLGLUCOSAMINE 1-CARBOXYVINYLTRANSFERASE"/>
    <property type="match status" value="1"/>
</dbReference>
<dbReference type="PANTHER" id="PTHR43783:SF2">
    <property type="entry name" value="UDP-N-ACETYLGLUCOSAMINE 1-CARBOXYVINYLTRANSFERASE 2"/>
    <property type="match status" value="1"/>
</dbReference>
<dbReference type="Pfam" id="PF00275">
    <property type="entry name" value="EPSP_synthase"/>
    <property type="match status" value="1"/>
</dbReference>
<dbReference type="SUPFAM" id="SSF55205">
    <property type="entry name" value="EPT/RTPC-like"/>
    <property type="match status" value="1"/>
</dbReference>
<accession>Q38V49</accession>
<protein>
    <recommendedName>
        <fullName evidence="1">UDP-N-acetylglucosamine 1-carboxyvinyltransferase 2</fullName>
        <ecNumber evidence="1">2.5.1.7</ecNumber>
    </recommendedName>
    <alternativeName>
        <fullName evidence="1">Enoylpyruvate transferase 2</fullName>
    </alternativeName>
    <alternativeName>
        <fullName evidence="1">UDP-N-acetylglucosamine enolpyruvyl transferase 2</fullName>
        <shortName evidence="1">EPT 2</shortName>
    </alternativeName>
</protein>
<evidence type="ECO:0000255" key="1">
    <source>
        <dbReference type="HAMAP-Rule" id="MF_00111"/>
    </source>
</evidence>
<gene>
    <name evidence="1" type="primary">murA2</name>
    <name type="ordered locus">LCA_1628</name>
</gene>